<comment type="function">
    <text evidence="1 2">Multifunctional transporter that transports L-glutamate as well as multiple ions such as chloride, proton, potassium, sodium and phosphate. At the synaptic vesicle membrane, mainly functions as an uniporter which transports preferentially L-glutamate but also phosphate from the cytoplasm into synaptic vesicles at presynaptic nerve terminals of excitatory neural cells. The L-glutamate or phosphate uniporter activity is electrogenic and is driven by the proton electrochemical gradient, mainly by the electrical gradient established by the vacuolar H(+)-ATPase across the synaptic vesicle membrane. In addition, functions as a chloride channel that allows a chloride permeation through the synaptic vesicle membrane that affects the proton electrochemical gradient and promotes synaptic vesicles acidification. Moreover, may function as a K(+)/H(+) antiport allowing to maintain the electrical gradient and to decrease chemical gradient and therefore sustain vesicular glutamate uptake. The vesicular K(+)/H(+) antiport activity is electroneutral. At the plasma membrane, following exocytosis, functions as a symporter of Na(+) and phosphate from the extracellular space to the cytoplasm allowing synaptic phosphate homeostasis regulation. The symporter activity is driven by an inside negative membrane potential and is electrogenic (By similarity). Is necessary for synaptic signaling of visual-evoked responses from photoreceptors (By similarity).</text>
</comment>
<comment type="catalytic activity">
    <reaction evidence="2">
        <text>L-glutamate(out) = L-glutamate(in)</text>
        <dbReference type="Rhea" id="RHEA:66336"/>
        <dbReference type="ChEBI" id="CHEBI:29985"/>
    </reaction>
</comment>
<comment type="catalytic activity">
    <reaction evidence="2">
        <text>chloride(in) = chloride(out)</text>
        <dbReference type="Rhea" id="RHEA:29823"/>
        <dbReference type="ChEBI" id="CHEBI:17996"/>
    </reaction>
</comment>
<comment type="catalytic activity">
    <reaction evidence="2">
        <text>3 Na(+)(out) + phosphate(out) = 3 Na(+)(in) + phosphate(in)</text>
        <dbReference type="Rhea" id="RHEA:71255"/>
        <dbReference type="ChEBI" id="CHEBI:29101"/>
        <dbReference type="ChEBI" id="CHEBI:43474"/>
    </reaction>
</comment>
<comment type="catalytic activity">
    <reaction evidence="2">
        <text>phosphate(in) = phosphate(out)</text>
        <dbReference type="Rhea" id="RHEA:32823"/>
        <dbReference type="ChEBI" id="CHEBI:43474"/>
    </reaction>
</comment>
<comment type="catalytic activity">
    <reaction evidence="2">
        <text>K(+)(in) + H(+)(out) = K(+)(out) + H(+)(in)</text>
        <dbReference type="Rhea" id="RHEA:29467"/>
        <dbReference type="ChEBI" id="CHEBI:15378"/>
        <dbReference type="ChEBI" id="CHEBI:29103"/>
    </reaction>
</comment>
<comment type="activity regulation">
    <text evidence="2">Chloride channel activity is allosterically activated by lumenal H(+) and Cl(-) leading to synaptic vesicles acidification. The L-glutamate transport activity is allosterically activated by lumenal H(+) and Cl(-). The allosteric activation by H(+) efficiently prevents non-vesicular efflux across the plasma membrane, thereby restricting L-glutamate transport activity to acidic membranes such as synaptic vesicles.</text>
</comment>
<comment type="subcellular location">
    <subcellularLocation>
        <location evidence="2">Cytoplasmic vesicle</location>
        <location evidence="2">Secretory vesicle</location>
        <location evidence="2">Synaptic vesicle membrane</location>
    </subcellularLocation>
    <subcellularLocation>
        <location evidence="2">Cell membrane</location>
        <topology evidence="2">Multi-pass membrane protein</topology>
    </subcellularLocation>
    <subcellularLocation>
        <location evidence="2">Synapse</location>
        <location evidence="2">Synaptosome</location>
    </subcellularLocation>
</comment>
<comment type="similarity">
    <text evidence="5">Belongs to the major facilitator superfamily. Sodium/anion cotransporter family. VGLUT subfamily.</text>
</comment>
<comment type="caution">
    <text evidence="1 2">Martineau M. et al. show that may function as a L-glutamate/H(+) antiporter (By similarity). However, according to Eriksen J. et al., H(+) is an allosteric activator (By similarity).</text>
</comment>
<dbReference type="EMBL" id="BC122986">
    <property type="protein sequence ID" value="AAI22987.1"/>
    <property type="molecule type" value="mRNA"/>
</dbReference>
<dbReference type="RefSeq" id="NP_001072608.1">
    <property type="nucleotide sequence ID" value="NM_001079140.1"/>
</dbReference>
<dbReference type="SMR" id="Q05B21"/>
<dbReference type="FunCoup" id="Q05B21">
    <property type="interactions" value="486"/>
</dbReference>
<dbReference type="STRING" id="8364.ENSXETP00000028049"/>
<dbReference type="GlyCosmos" id="Q05B21">
    <property type="glycosylation" value="1 site, No reported glycans"/>
</dbReference>
<dbReference type="GeneID" id="780064"/>
<dbReference type="KEGG" id="xtr:780064"/>
<dbReference type="AGR" id="Xenbase:XB-GENE-5742677"/>
<dbReference type="CTD" id="57030"/>
<dbReference type="Xenbase" id="XB-GENE-5742677">
    <property type="gene designation" value="slc17a7"/>
</dbReference>
<dbReference type="InParanoid" id="Q05B21"/>
<dbReference type="OMA" id="YNSYMHG"/>
<dbReference type="OrthoDB" id="2985014at2759"/>
<dbReference type="Reactome" id="R-XTR-210500">
    <property type="pathway name" value="Glutamate Neurotransmitter Release Cycle"/>
</dbReference>
<dbReference type="Reactome" id="R-XTR-428643">
    <property type="pathway name" value="Organic anion transporters"/>
</dbReference>
<dbReference type="Proteomes" id="UP000008143">
    <property type="component" value="Chromosome 7"/>
</dbReference>
<dbReference type="ExpressionAtlas" id="Q05B21">
    <property type="expression patterns" value="differential"/>
</dbReference>
<dbReference type="GO" id="GO:0034707">
    <property type="term" value="C:chloride channel complex"/>
    <property type="evidence" value="ECO:0007669"/>
    <property type="project" value="UniProtKB-KW"/>
</dbReference>
<dbReference type="GO" id="GO:0043005">
    <property type="term" value="C:neuron projection"/>
    <property type="evidence" value="ECO:0007669"/>
    <property type="project" value="UniProtKB-KW"/>
</dbReference>
<dbReference type="GO" id="GO:0005886">
    <property type="term" value="C:plasma membrane"/>
    <property type="evidence" value="ECO:0007669"/>
    <property type="project" value="UniProtKB-SubCell"/>
</dbReference>
<dbReference type="GO" id="GO:0030672">
    <property type="term" value="C:synaptic vesicle membrane"/>
    <property type="evidence" value="ECO:0000250"/>
    <property type="project" value="UniProtKB"/>
</dbReference>
<dbReference type="GO" id="GO:0005254">
    <property type="term" value="F:chloride channel activity"/>
    <property type="evidence" value="ECO:0000250"/>
    <property type="project" value="UniProtKB"/>
</dbReference>
<dbReference type="GO" id="GO:0140788">
    <property type="term" value="F:L-glutamate uniporter activity"/>
    <property type="evidence" value="ECO:0000250"/>
    <property type="project" value="UniProtKB"/>
</dbReference>
<dbReference type="GO" id="GO:0140787">
    <property type="term" value="F:phosphate ion uniporter activity"/>
    <property type="evidence" value="ECO:0000250"/>
    <property type="project" value="UniProtKB"/>
</dbReference>
<dbReference type="GO" id="GO:0015386">
    <property type="term" value="F:potassium:proton antiporter activity"/>
    <property type="evidence" value="ECO:0000250"/>
    <property type="project" value="UniProtKB"/>
</dbReference>
<dbReference type="GO" id="GO:0005436">
    <property type="term" value="F:sodium:phosphate symporter activity"/>
    <property type="evidence" value="ECO:0000250"/>
    <property type="project" value="UniProtKB"/>
</dbReference>
<dbReference type="GO" id="GO:0006821">
    <property type="term" value="P:chloride transport"/>
    <property type="evidence" value="ECO:0000250"/>
    <property type="project" value="UniProtKB"/>
</dbReference>
<dbReference type="GO" id="GO:0015813">
    <property type="term" value="P:L-glutamate transmembrane transport"/>
    <property type="evidence" value="ECO:0000250"/>
    <property type="project" value="UniProtKB"/>
</dbReference>
<dbReference type="GO" id="GO:0006836">
    <property type="term" value="P:neurotransmitter transport"/>
    <property type="evidence" value="ECO:0007669"/>
    <property type="project" value="UniProtKB-KW"/>
</dbReference>
<dbReference type="GO" id="GO:0006817">
    <property type="term" value="P:phosphate ion transport"/>
    <property type="evidence" value="ECO:0000250"/>
    <property type="project" value="UniProtKB"/>
</dbReference>
<dbReference type="GO" id="GO:0006813">
    <property type="term" value="P:potassium ion transport"/>
    <property type="evidence" value="ECO:0000250"/>
    <property type="project" value="UniProtKB"/>
</dbReference>
<dbReference type="GO" id="GO:0044341">
    <property type="term" value="P:sodium-dependent phosphate transport"/>
    <property type="evidence" value="ECO:0000250"/>
    <property type="project" value="UniProtKB"/>
</dbReference>
<dbReference type="CDD" id="cd17382">
    <property type="entry name" value="MFS_SLC17A6_7_8_VGluT"/>
    <property type="match status" value="1"/>
</dbReference>
<dbReference type="FunFam" id="1.20.1250.20:FF:000004">
    <property type="entry name" value="vesicular glutamate transporter 2 isoform X1"/>
    <property type="match status" value="1"/>
</dbReference>
<dbReference type="FunFam" id="1.20.1250.20:FF:000005">
    <property type="entry name" value="vesicular glutamate transporter 2 isoform X1"/>
    <property type="match status" value="1"/>
</dbReference>
<dbReference type="Gene3D" id="1.20.1250.20">
    <property type="entry name" value="MFS general substrate transporter like domains"/>
    <property type="match status" value="2"/>
</dbReference>
<dbReference type="InterPro" id="IPR011701">
    <property type="entry name" value="MFS"/>
</dbReference>
<dbReference type="InterPro" id="IPR020846">
    <property type="entry name" value="MFS_dom"/>
</dbReference>
<dbReference type="InterPro" id="IPR050382">
    <property type="entry name" value="MFS_Na/Anion_cotransporter"/>
</dbReference>
<dbReference type="InterPro" id="IPR036259">
    <property type="entry name" value="MFS_trans_sf"/>
</dbReference>
<dbReference type="PANTHER" id="PTHR11662">
    <property type="entry name" value="SOLUTE CARRIER FAMILY 17"/>
    <property type="match status" value="1"/>
</dbReference>
<dbReference type="PANTHER" id="PTHR11662:SF29">
    <property type="entry name" value="VESICULAR GLUTAMATE TRANSPORTER 1"/>
    <property type="match status" value="1"/>
</dbReference>
<dbReference type="Pfam" id="PF07690">
    <property type="entry name" value="MFS_1"/>
    <property type="match status" value="1"/>
</dbReference>
<dbReference type="SUPFAM" id="SSF103473">
    <property type="entry name" value="MFS general substrate transporter"/>
    <property type="match status" value="1"/>
</dbReference>
<dbReference type="PROSITE" id="PS50850">
    <property type="entry name" value="MFS"/>
    <property type="match status" value="1"/>
</dbReference>
<reference key="1">
    <citation type="submission" date="2006-09" db="EMBL/GenBank/DDBJ databases">
        <authorList>
            <consortium name="NIH - Xenopus Gene Collection (XGC) project"/>
        </authorList>
    </citation>
    <scope>NUCLEOTIDE SEQUENCE [LARGE SCALE MRNA]</scope>
    <source>
        <tissue>Brain</tissue>
    </source>
</reference>
<keyword id="KW-0050">Antiport</keyword>
<keyword id="KW-1003">Cell membrane</keyword>
<keyword id="KW-0868">Chloride</keyword>
<keyword id="KW-0869">Chloride channel</keyword>
<keyword id="KW-0968">Cytoplasmic vesicle</keyword>
<keyword id="KW-0325">Glycoprotein</keyword>
<keyword id="KW-0407">Ion channel</keyword>
<keyword id="KW-0406">Ion transport</keyword>
<keyword id="KW-0472">Membrane</keyword>
<keyword id="KW-0532">Neurotransmitter transport</keyword>
<keyword id="KW-0592">Phosphate transport</keyword>
<keyword id="KW-1185">Reference proteome</keyword>
<keyword id="KW-0915">Sodium</keyword>
<keyword id="KW-0739">Sodium transport</keyword>
<keyword id="KW-0769">Symport</keyword>
<keyword id="KW-0770">Synapse</keyword>
<keyword id="KW-0771">Synaptosome</keyword>
<keyword id="KW-0812">Transmembrane</keyword>
<keyword id="KW-1133">Transmembrane helix</keyword>
<keyword id="KW-0813">Transport</keyword>
<organism>
    <name type="scientific">Xenopus tropicalis</name>
    <name type="common">Western clawed frog</name>
    <name type="synonym">Silurana tropicalis</name>
    <dbReference type="NCBI Taxonomy" id="8364"/>
    <lineage>
        <taxon>Eukaryota</taxon>
        <taxon>Metazoa</taxon>
        <taxon>Chordata</taxon>
        <taxon>Craniata</taxon>
        <taxon>Vertebrata</taxon>
        <taxon>Euteleostomi</taxon>
        <taxon>Amphibia</taxon>
        <taxon>Batrachia</taxon>
        <taxon>Anura</taxon>
        <taxon>Pipoidea</taxon>
        <taxon>Pipidae</taxon>
        <taxon>Xenopodinae</taxon>
        <taxon>Xenopus</taxon>
        <taxon>Silurana</taxon>
    </lineage>
</organism>
<evidence type="ECO:0000250" key="1">
    <source>
        <dbReference type="UniProtKB" id="Q3TXX4"/>
    </source>
</evidence>
<evidence type="ECO:0000250" key="2">
    <source>
        <dbReference type="UniProtKB" id="Q62634"/>
    </source>
</evidence>
<evidence type="ECO:0000255" key="3"/>
<evidence type="ECO:0000256" key="4">
    <source>
        <dbReference type="SAM" id="MobiDB-lite"/>
    </source>
</evidence>
<evidence type="ECO:0000305" key="5"/>
<protein>
    <recommendedName>
        <fullName evidence="1">Vesicular glutamate transporter 1</fullName>
        <shortName evidence="1">VGluT1</shortName>
    </recommendedName>
    <alternativeName>
        <fullName>Solute carrier family 17 member 7</fullName>
    </alternativeName>
</protein>
<sequence length="576" mass="64006">MEFRKEEFKKLAGNTLGHLHRILEKKQTNGETIELTEEGRPVIKEEKRQPVVDCTCFGLPRRYIIAIMSGLGFCISFGIRCNLGVAIVSMVNNNTVYKGNKIVIEQAQFTWDPETVGMIHGSFFWGYIVTQIPGGYICQKFAANRVFGFAIVATSTLNMLIPSAARVHFACVICVRILQGLVEGVTYPACHGIWSKWAPPLERSRLATTAFCGSYAGAVVAMPLAGVLVQYSGWSSVFYVYGSFGIMWYMFWILVSYESPAIHPTISEEEKKYIEESIGESTGLMNPMAKFKAPWRKFFTSMPVYAIIVANFCRSWTFYLLLISQPAYFEEVFGFEISKVGLLSALPHLVMTIIVPIGGQIADFLRTKRIMSTTNVRKMMNCGGFGMEATLLLVVGYSHSRGVAISFLVLAVGFSGFAISGFNVNHLDIAPRYASILMGISNGVGTLSGMVCPLIVGAMTKHKTREEWQYVFLIASLVHYGGVLFYGIFASGEKQPWAEPEETSDEKCGFIHEDELADESEEQSQAYGAYGSYGATQTTSQQNGGWTAEWEKKEEFIQDQGKDPYLYGTVAERDLS</sequence>
<name>VGLU1_XENTR</name>
<gene>
    <name evidence="1" type="primary">slc17a7</name>
    <name type="synonym">vglut1</name>
</gene>
<accession>Q05B21</accession>
<proteinExistence type="evidence at transcript level"/>
<feature type="chain" id="PRO_0000318175" description="Vesicular glutamate transporter 1">
    <location>
        <begin position="1"/>
        <end position="576"/>
    </location>
</feature>
<feature type="topological domain" description="Cytoplasmic" evidence="3">
    <location>
        <begin position="1"/>
        <end position="63"/>
    </location>
</feature>
<feature type="transmembrane region" description="Helical" evidence="3">
    <location>
        <begin position="64"/>
        <end position="84"/>
    </location>
</feature>
<feature type="topological domain" description="Vesicular" evidence="3">
    <location>
        <begin position="85"/>
        <end position="116"/>
    </location>
</feature>
<feature type="transmembrane region" description="Helical" evidence="3">
    <location>
        <begin position="117"/>
        <end position="137"/>
    </location>
</feature>
<feature type="topological domain" description="Cytoplasmic" evidence="3">
    <location>
        <begin position="138"/>
        <end position="140"/>
    </location>
</feature>
<feature type="transmembrane region" description="Helical" evidence="3">
    <location>
        <begin position="141"/>
        <end position="161"/>
    </location>
</feature>
<feature type="topological domain" description="Vesicular" evidence="3">
    <location>
        <begin position="162"/>
        <end position="168"/>
    </location>
</feature>
<feature type="transmembrane region" description="Helical" evidence="3">
    <location>
        <begin position="169"/>
        <end position="189"/>
    </location>
</feature>
<feature type="topological domain" description="Cytoplasmic" evidence="3">
    <location>
        <begin position="190"/>
        <end position="208"/>
    </location>
</feature>
<feature type="transmembrane region" description="Helical" evidence="3">
    <location>
        <begin position="209"/>
        <end position="229"/>
    </location>
</feature>
<feature type="topological domain" description="Vesicular" evidence="3">
    <location>
        <begin position="230"/>
        <end position="236"/>
    </location>
</feature>
<feature type="transmembrane region" description="Helical" evidence="3">
    <location>
        <begin position="237"/>
        <end position="257"/>
    </location>
</feature>
<feature type="topological domain" description="Cytoplasmic" evidence="3">
    <location>
        <begin position="258"/>
        <end position="302"/>
    </location>
</feature>
<feature type="transmembrane region" description="Helical" evidence="3">
    <location>
        <begin position="303"/>
        <end position="323"/>
    </location>
</feature>
<feature type="topological domain" description="Vesicular" evidence="3">
    <location>
        <begin position="324"/>
        <end position="341"/>
    </location>
</feature>
<feature type="transmembrane region" description="Helical" evidence="3">
    <location>
        <begin position="342"/>
        <end position="362"/>
    </location>
</feature>
<feature type="topological domain" description="Cytoplasmic" evidence="3">
    <location>
        <begin position="363"/>
        <end position="378"/>
    </location>
</feature>
<feature type="transmembrane region" description="Helical" evidence="3">
    <location>
        <begin position="379"/>
        <end position="399"/>
    </location>
</feature>
<feature type="topological domain" description="Vesicular" evidence="3">
    <location>
        <begin position="400"/>
        <end position="401"/>
    </location>
</feature>
<feature type="transmembrane region" description="Helical" evidence="3">
    <location>
        <begin position="402"/>
        <end position="422"/>
    </location>
</feature>
<feature type="topological domain" description="Cytoplasmic" evidence="3">
    <location>
        <begin position="423"/>
        <end position="435"/>
    </location>
</feature>
<feature type="transmembrane region" description="Helical" evidence="3">
    <location>
        <begin position="436"/>
        <end position="456"/>
    </location>
</feature>
<feature type="topological domain" description="Vesicular" evidence="3">
    <location>
        <begin position="457"/>
        <end position="469"/>
    </location>
</feature>
<feature type="transmembrane region" description="Helical" evidence="3">
    <location>
        <begin position="470"/>
        <end position="490"/>
    </location>
</feature>
<feature type="topological domain" description="Cytoplasmic" evidence="3">
    <location>
        <begin position="491"/>
        <end position="576"/>
    </location>
</feature>
<feature type="region of interest" description="Disordered" evidence="4">
    <location>
        <begin position="517"/>
        <end position="547"/>
    </location>
</feature>
<feature type="compositionally biased region" description="Polar residues" evidence="4">
    <location>
        <begin position="534"/>
        <end position="545"/>
    </location>
</feature>
<feature type="glycosylation site" description="N-linked (GlcNAc...) asparagine" evidence="3">
    <location>
        <position position="93"/>
    </location>
</feature>